<sequence>MQESINGNLSEERISGAQQPEAWNGAPVNGSPEQQSASGAESNQLRFQSSLSDSERERQKATDLEHRRAAFARHFGCAPGSEKHVESYSSFDEKDTRVQLAEFYRFNDGHLKKWGYF</sequence>
<keyword id="KW-0068">Autocatalytic cleavage</keyword>
<keyword id="KW-1035">Host cytoplasm</keyword>
<keyword id="KW-0378">Hydrolase</keyword>
<keyword id="KW-0645">Protease</keyword>
<keyword id="KW-0118">Viral capsid assembly</keyword>
<keyword id="KW-1188">Viral release from host cell</keyword>
<dbReference type="EC" id="3.4.-.-" evidence="1"/>
<dbReference type="EMBL" id="X60323">
    <property type="protein sequence ID" value="CAA42885.1"/>
    <property type="molecule type" value="Genomic_DNA"/>
</dbReference>
<dbReference type="RefSeq" id="NP_043943.1">
    <property type="nucleotide sequence ID" value="NC_001730.1"/>
</dbReference>
<dbReference type="SMR" id="Q38036"/>
<dbReference type="GeneID" id="1261193"/>
<dbReference type="KEGG" id="vg:1261193"/>
<dbReference type="Proteomes" id="UP000002122">
    <property type="component" value="Segment"/>
</dbReference>
<dbReference type="GO" id="GO:0030430">
    <property type="term" value="C:host cell cytoplasm"/>
    <property type="evidence" value="ECO:0007669"/>
    <property type="project" value="UniProtKB-SubCell"/>
</dbReference>
<dbReference type="GO" id="GO:0008233">
    <property type="term" value="F:peptidase activity"/>
    <property type="evidence" value="ECO:0007669"/>
    <property type="project" value="UniProtKB-KW"/>
</dbReference>
<dbReference type="GO" id="GO:0006508">
    <property type="term" value="P:proteolysis"/>
    <property type="evidence" value="ECO:0007669"/>
    <property type="project" value="UniProtKB-KW"/>
</dbReference>
<dbReference type="GO" id="GO:0019069">
    <property type="term" value="P:viral capsid assembly"/>
    <property type="evidence" value="ECO:0007669"/>
    <property type="project" value="InterPro"/>
</dbReference>
<dbReference type="Gene3D" id="4.10.1260.10">
    <property type="entry name" value="Scaffolding protein gpD of bacteriophage procapsid"/>
    <property type="match status" value="1"/>
</dbReference>
<dbReference type="InterPro" id="IPR003513">
    <property type="entry name" value="Phage_B"/>
</dbReference>
<dbReference type="InterPro" id="IPR038149">
    <property type="entry name" value="Phage_B_sf"/>
</dbReference>
<dbReference type="Pfam" id="PF02304">
    <property type="entry name" value="Phage_B"/>
    <property type="match status" value="1"/>
</dbReference>
<comment type="function">
    <text evidence="1">Participates in the assembly of the viral procapsid in the cytoplasm. Forms first a 12S pre-assembly complex with protein H, and F and G pentamers, then twelve 12S complexes are joined by the D protein to form the procapsid. Internal scaffold protein B is released from the procapsid upon genome packaging. Autoproteolytic activity cleaves protein B and probably facilitates its removal through the pores of the procapsid.</text>
</comment>
<comment type="subunit">
    <text evidence="1">Component of the procapsid complex composed of 60 copies of the internally located B, 240 copies of the external scaffolding protein D, 60 copies of each of the viral structural proteins F and G proteins, and 12 copies of H.</text>
</comment>
<comment type="subcellular location">
    <subcellularLocation>
        <location evidence="1">Host cytoplasm</location>
    </subcellularLocation>
</comment>
<comment type="PTM">
    <text evidence="1">The proteolytic cleavage of the internal scaffolding protein B releases the scaffold protein in order to continue virion assembly.</text>
</comment>
<comment type="miscellaneous">
    <text>Phi KhT, a host-range mutant of phi K, can grow on E.coli C and B, besides K12, and is more thermosensitive than the parental phage phi K.</text>
</comment>
<comment type="similarity">
    <text evidence="3">Belongs to the microviridae B protein family.</text>
</comment>
<organismHost>
    <name type="scientific">Escherichia coli</name>
    <dbReference type="NCBI Taxonomy" id="562"/>
</organismHost>
<accession>Q38036</accession>
<feature type="chain" id="PRO_0000164869" description="Internal scaffolding protein B">
    <location>
        <begin position="1"/>
        <end position="117"/>
    </location>
</feature>
<feature type="region of interest" description="Disordered" evidence="2">
    <location>
        <begin position="1"/>
        <end position="65"/>
    </location>
</feature>
<feature type="compositionally biased region" description="Polar residues" evidence="2">
    <location>
        <begin position="31"/>
        <end position="52"/>
    </location>
</feature>
<feature type="compositionally biased region" description="Basic and acidic residues" evidence="2">
    <location>
        <begin position="53"/>
        <end position="65"/>
    </location>
</feature>
<feature type="site" description="Cleavage; by autolysis" evidence="1">
    <location>
        <begin position="74"/>
        <end position="75"/>
    </location>
</feature>
<feature type="site" description="Cleavage; by autolysis" evidence="1">
    <location>
        <begin position="90"/>
        <end position="91"/>
    </location>
</feature>
<feature type="site" description="Cleavage; by autolysis" evidence="1">
    <location>
        <begin position="105"/>
        <end position="106"/>
    </location>
</feature>
<organism>
    <name type="scientific">Enterobacteria phage phiK</name>
    <name type="common">Bacteriophage phi-K</name>
    <dbReference type="NCBI Taxonomy" id="10848"/>
    <lineage>
        <taxon>Viruses</taxon>
        <taxon>Monodnaviria</taxon>
        <taxon>Sangervirae</taxon>
        <taxon>Phixviricota</taxon>
        <taxon>Malgrandaviricetes</taxon>
        <taxon>Petitvirales</taxon>
        <taxon>Microviridae</taxon>
        <taxon>Bullavirinae</taxon>
        <taxon>Alphatrevirus</taxon>
    </lineage>
</organism>
<proteinExistence type="inferred from homology"/>
<evidence type="ECO:0000250" key="1">
    <source>
        <dbReference type="UniProtKB" id="P03633"/>
    </source>
</evidence>
<evidence type="ECO:0000256" key="2">
    <source>
        <dbReference type="SAM" id="MobiDB-lite"/>
    </source>
</evidence>
<evidence type="ECO:0000305" key="3"/>
<name>SCAFB_BPPHK</name>
<gene>
    <name type="primary">B</name>
</gene>
<reference key="1">
    <citation type="journal article" date="1996" name="J. Biochem.">
        <title>The virion proteins encoded by bacteriophage phi K and its host-range mutant phi KhT: host-range determination and DNA binding properties.</title>
        <authorList>
            <person name="Kodaira K."/>
            <person name="Oki M."/>
            <person name="Kakikawa M."/>
            <person name="Kimoto H."/>
            <person name="Taketo A."/>
        </authorList>
    </citation>
    <scope>NUCLEOTIDE SEQUENCE [GENOMIC DNA] (PHI-K AND MUTANT PHI KHT)</scope>
</reference>
<protein>
    <recommendedName>
        <fullName>Internal scaffolding protein B</fullName>
        <ecNumber evidence="1">3.4.-.-</ecNumber>
    </recommendedName>
    <alternativeName>
        <fullName>Scaffolding protein B</fullName>
        <shortName>GPB</shortName>
    </alternativeName>
</protein>